<gene>
    <name evidence="1" type="primary">ispE</name>
    <name type="ordered locus">MS1535</name>
</gene>
<evidence type="ECO:0000255" key="1">
    <source>
        <dbReference type="HAMAP-Rule" id="MF_00061"/>
    </source>
</evidence>
<protein>
    <recommendedName>
        <fullName evidence="1">4-diphosphocytidyl-2-C-methyl-D-erythritol kinase</fullName>
        <shortName evidence="1">CMK</shortName>
        <ecNumber evidence="1">2.7.1.148</ecNumber>
    </recommendedName>
    <alternativeName>
        <fullName evidence="1">4-(cytidine-5'-diphospho)-2-C-methyl-D-erythritol kinase</fullName>
    </alternativeName>
</protein>
<dbReference type="EC" id="2.7.1.148" evidence="1"/>
<dbReference type="EMBL" id="AE016827">
    <property type="protein sequence ID" value="AAU38142.1"/>
    <property type="molecule type" value="Genomic_DNA"/>
</dbReference>
<dbReference type="RefSeq" id="WP_011200708.1">
    <property type="nucleotide sequence ID" value="NC_006300.1"/>
</dbReference>
<dbReference type="SMR" id="Q65SB8"/>
<dbReference type="STRING" id="221988.MS1535"/>
<dbReference type="KEGG" id="msu:MS1535"/>
<dbReference type="eggNOG" id="COG1947">
    <property type="taxonomic scope" value="Bacteria"/>
</dbReference>
<dbReference type="HOGENOM" id="CLU_053057_3_0_6"/>
<dbReference type="OrthoDB" id="9809438at2"/>
<dbReference type="UniPathway" id="UPA00056">
    <property type="reaction ID" value="UER00094"/>
</dbReference>
<dbReference type="Proteomes" id="UP000000607">
    <property type="component" value="Chromosome"/>
</dbReference>
<dbReference type="GO" id="GO:0050515">
    <property type="term" value="F:4-(cytidine 5'-diphospho)-2-C-methyl-D-erythritol kinase activity"/>
    <property type="evidence" value="ECO:0007669"/>
    <property type="project" value="UniProtKB-UniRule"/>
</dbReference>
<dbReference type="GO" id="GO:0005524">
    <property type="term" value="F:ATP binding"/>
    <property type="evidence" value="ECO:0007669"/>
    <property type="project" value="UniProtKB-UniRule"/>
</dbReference>
<dbReference type="GO" id="GO:0019288">
    <property type="term" value="P:isopentenyl diphosphate biosynthetic process, methylerythritol 4-phosphate pathway"/>
    <property type="evidence" value="ECO:0007669"/>
    <property type="project" value="UniProtKB-UniRule"/>
</dbReference>
<dbReference type="GO" id="GO:0016114">
    <property type="term" value="P:terpenoid biosynthetic process"/>
    <property type="evidence" value="ECO:0007669"/>
    <property type="project" value="InterPro"/>
</dbReference>
<dbReference type="FunFam" id="3.30.230.10:FF:000022">
    <property type="entry name" value="4-diphosphocytidyl-2-C-methyl-D-erythritol kinase"/>
    <property type="match status" value="1"/>
</dbReference>
<dbReference type="Gene3D" id="3.30.230.10">
    <property type="match status" value="1"/>
</dbReference>
<dbReference type="Gene3D" id="3.30.70.890">
    <property type="entry name" value="GHMP kinase, C-terminal domain"/>
    <property type="match status" value="1"/>
</dbReference>
<dbReference type="HAMAP" id="MF_00061">
    <property type="entry name" value="IspE"/>
    <property type="match status" value="1"/>
</dbReference>
<dbReference type="InterPro" id="IPR013750">
    <property type="entry name" value="GHMP_kinase_C_dom"/>
</dbReference>
<dbReference type="InterPro" id="IPR036554">
    <property type="entry name" value="GHMP_kinase_C_sf"/>
</dbReference>
<dbReference type="InterPro" id="IPR006204">
    <property type="entry name" value="GHMP_kinase_N_dom"/>
</dbReference>
<dbReference type="InterPro" id="IPR004424">
    <property type="entry name" value="IspE"/>
</dbReference>
<dbReference type="InterPro" id="IPR020568">
    <property type="entry name" value="Ribosomal_Su5_D2-typ_SF"/>
</dbReference>
<dbReference type="InterPro" id="IPR014721">
    <property type="entry name" value="Ribsml_uS5_D2-typ_fold_subgr"/>
</dbReference>
<dbReference type="NCBIfam" id="TIGR00154">
    <property type="entry name" value="ispE"/>
    <property type="match status" value="1"/>
</dbReference>
<dbReference type="PANTHER" id="PTHR43527">
    <property type="entry name" value="4-DIPHOSPHOCYTIDYL-2-C-METHYL-D-ERYTHRITOL KINASE, CHLOROPLASTIC"/>
    <property type="match status" value="1"/>
</dbReference>
<dbReference type="PANTHER" id="PTHR43527:SF2">
    <property type="entry name" value="4-DIPHOSPHOCYTIDYL-2-C-METHYL-D-ERYTHRITOL KINASE, CHLOROPLASTIC"/>
    <property type="match status" value="1"/>
</dbReference>
<dbReference type="Pfam" id="PF08544">
    <property type="entry name" value="GHMP_kinases_C"/>
    <property type="match status" value="1"/>
</dbReference>
<dbReference type="Pfam" id="PF00288">
    <property type="entry name" value="GHMP_kinases_N"/>
    <property type="match status" value="1"/>
</dbReference>
<dbReference type="PIRSF" id="PIRSF010376">
    <property type="entry name" value="IspE"/>
    <property type="match status" value="1"/>
</dbReference>
<dbReference type="SUPFAM" id="SSF55060">
    <property type="entry name" value="GHMP Kinase, C-terminal domain"/>
    <property type="match status" value="1"/>
</dbReference>
<dbReference type="SUPFAM" id="SSF54211">
    <property type="entry name" value="Ribosomal protein S5 domain 2-like"/>
    <property type="match status" value="1"/>
</dbReference>
<feature type="chain" id="PRO_0000235102" description="4-diphosphocytidyl-2-C-methyl-D-erythritol kinase">
    <location>
        <begin position="1"/>
        <end position="302"/>
    </location>
</feature>
<feature type="active site" evidence="1">
    <location>
        <position position="27"/>
    </location>
</feature>
<feature type="active site" evidence="1">
    <location>
        <position position="152"/>
    </location>
</feature>
<feature type="binding site" evidence="1">
    <location>
        <begin position="110"/>
        <end position="120"/>
    </location>
    <ligand>
        <name>ATP</name>
        <dbReference type="ChEBI" id="CHEBI:30616"/>
    </ligand>
</feature>
<keyword id="KW-0067">ATP-binding</keyword>
<keyword id="KW-0414">Isoprene biosynthesis</keyword>
<keyword id="KW-0418">Kinase</keyword>
<keyword id="KW-0547">Nucleotide-binding</keyword>
<keyword id="KW-0808">Transferase</keyword>
<reference key="1">
    <citation type="journal article" date="2004" name="Nat. Biotechnol.">
        <title>The genome sequence of the capnophilic rumen bacterium Mannheimia succiniciproducens.</title>
        <authorList>
            <person name="Hong S.H."/>
            <person name="Kim J.S."/>
            <person name="Lee S.Y."/>
            <person name="In Y.H."/>
            <person name="Choi S.S."/>
            <person name="Rih J.-K."/>
            <person name="Kim C.H."/>
            <person name="Jeong H."/>
            <person name="Hur C.G."/>
            <person name="Kim J.J."/>
        </authorList>
    </citation>
    <scope>NUCLEOTIDE SEQUENCE [LARGE SCALE GENOMIC DNA]</scope>
    <source>
        <strain>KCTC 0769BP / MBEL55E</strain>
    </source>
</reference>
<accession>Q65SB8</accession>
<organism>
    <name type="scientific">Mannheimia succiniciproducens (strain KCTC 0769BP / MBEL55E)</name>
    <dbReference type="NCBI Taxonomy" id="221988"/>
    <lineage>
        <taxon>Bacteria</taxon>
        <taxon>Pseudomonadati</taxon>
        <taxon>Pseudomonadota</taxon>
        <taxon>Gammaproteobacteria</taxon>
        <taxon>Pasteurellales</taxon>
        <taxon>Pasteurellaceae</taxon>
        <taxon>Basfia</taxon>
    </lineage>
</organism>
<sequence>MKTHQFSTALFSDYKQGDSFNFPCPAKLNLFLYINGRRTDGYHELQTLFQFLDYGDWLSIKVRNDGKIRLTPEIPDLKTEDNLIYRAAKLLQQKTACRLGADLHLDKVLPMGGGVGGGSSNAATALVALNYLWKTGLSVNELAELGLKLGADVPIFVHGKAAFAEGVGEKITYCEPPEKWYAVIKPNVSISTAKVFSEPDLTRDTKKKPLEQLLQQEYTNDCEKVVRKLYPEVEELLRWLVKYAPSRLTGSGACVFAEFADEQSAQTVFNLKSKQFSGFVAQGLNVSPLHKMLEQLNRQNHG</sequence>
<proteinExistence type="inferred from homology"/>
<name>ISPE_MANSM</name>
<comment type="function">
    <text evidence="1">Catalyzes the phosphorylation of the position 2 hydroxy group of 4-diphosphocytidyl-2C-methyl-D-erythritol.</text>
</comment>
<comment type="catalytic activity">
    <reaction evidence="1">
        <text>4-CDP-2-C-methyl-D-erythritol + ATP = 4-CDP-2-C-methyl-D-erythritol 2-phosphate + ADP + H(+)</text>
        <dbReference type="Rhea" id="RHEA:18437"/>
        <dbReference type="ChEBI" id="CHEBI:15378"/>
        <dbReference type="ChEBI" id="CHEBI:30616"/>
        <dbReference type="ChEBI" id="CHEBI:57823"/>
        <dbReference type="ChEBI" id="CHEBI:57919"/>
        <dbReference type="ChEBI" id="CHEBI:456216"/>
        <dbReference type="EC" id="2.7.1.148"/>
    </reaction>
</comment>
<comment type="pathway">
    <text evidence="1">Isoprenoid biosynthesis; isopentenyl diphosphate biosynthesis via DXP pathway; isopentenyl diphosphate from 1-deoxy-D-xylulose 5-phosphate: step 3/6.</text>
</comment>
<comment type="similarity">
    <text evidence="1">Belongs to the GHMP kinase family. IspE subfamily.</text>
</comment>